<proteinExistence type="inferred from homology"/>
<sequence>MTTATRFPQFSQDLASDPTTRRLWYGIATAHDFETHDGMTEERLYQKLFATHFGHLAIIFLWASGNVFHIAWQGNYEQWVANPTGVTPIAHAIWDPHFGKAAVEAFTQPGGGGPVNAAYSGLYYWFNTIGLRTNGDLYAGAIGLLLLAAVFLFAGWLHLQPRFRPSLSWFKNAEARLNHHLAGLFGVSSLAWTGHLVHVAIPESRGQHVGWDNFLTTLPHPAGLKPFFTLNWGVYAQNPDTANHVWGTAEGAGTAILTFLGGFNPNTQSLWLTDMAHHHLAIAVIFIVAGHMYRTNWGIGHSIREILGAHNPPKGTPFGGLLGEGHKGLYDTVNNSLHFQLALALACLGVVTSLVAQHMYALNPYVFMSMDHTTEAALYTHHQYIAGFLMVGAFAHGAIFLVRDYDPEANKNNVLARVLDHKEAIISHLSWVSLFLGFHTLGLYVHNDVMQAFGTPEKQILIEPVFAQFIQASHGKMIYGMDVLLSNPDSLASTAWPNYGNVWLPGWLQAINDPNGSLFLPIGPGDFLVHHAIALGLHTTTLILVKGALDARGSKLMPDKKDFGYSFPCDGPGRGGTCDISAWDAFYLAMFWMLNTIGWVTFYWHWKQLGVWSGNTAQFNENSTYLMGWLRDYLWANSAQLINGYNPYGMNNLAVWAWMFLFGHLVWATGFMFLISWRGYWQELIETLVWAHERTPLAKLIRWKDKPVAMSIVQGRLVGLAHFTVGYVLTYAAFVIASTASQSG</sequence>
<reference key="1">
    <citation type="journal article" date="2007" name="ISME J.">
        <title>Population level functional diversity in a microbial community revealed by comparative genomic and metagenomic analyses.</title>
        <authorList>
            <person name="Bhaya D."/>
            <person name="Grossman A.R."/>
            <person name="Steunou A.-S."/>
            <person name="Khuri N."/>
            <person name="Cohan F.M."/>
            <person name="Hamamura N."/>
            <person name="Melendrez M.C."/>
            <person name="Bateson M.M."/>
            <person name="Ward D.M."/>
            <person name="Heidelberg J.F."/>
        </authorList>
    </citation>
    <scope>NUCLEOTIDE SEQUENCE [LARGE SCALE GENOMIC DNA]</scope>
    <source>
        <strain>JA-2-3B'a(2-13)</strain>
    </source>
</reference>
<name>PSAB_SYNJB</name>
<organism>
    <name type="scientific">Synechococcus sp. (strain JA-2-3B'a(2-13))</name>
    <name type="common">Cyanobacteria bacterium Yellowstone B-Prime</name>
    <dbReference type="NCBI Taxonomy" id="321332"/>
    <lineage>
        <taxon>Bacteria</taxon>
        <taxon>Bacillati</taxon>
        <taxon>Cyanobacteriota</taxon>
        <taxon>Cyanophyceae</taxon>
        <taxon>Synechococcales</taxon>
        <taxon>Synechococcaceae</taxon>
        <taxon>Synechococcus</taxon>
    </lineage>
</organism>
<gene>
    <name evidence="1" type="primary">psaB</name>
    <name type="ordered locus">CYB_0021</name>
</gene>
<keyword id="KW-0004">4Fe-4S</keyword>
<keyword id="KW-0148">Chlorophyll</keyword>
<keyword id="KW-0157">Chromophore</keyword>
<keyword id="KW-0249">Electron transport</keyword>
<keyword id="KW-0408">Iron</keyword>
<keyword id="KW-0411">Iron-sulfur</keyword>
<keyword id="KW-0460">Magnesium</keyword>
<keyword id="KW-0472">Membrane</keyword>
<keyword id="KW-0479">Metal-binding</keyword>
<keyword id="KW-0560">Oxidoreductase</keyword>
<keyword id="KW-0602">Photosynthesis</keyword>
<keyword id="KW-0603">Photosystem I</keyword>
<keyword id="KW-1185">Reference proteome</keyword>
<keyword id="KW-0793">Thylakoid</keyword>
<keyword id="KW-0812">Transmembrane</keyword>
<keyword id="KW-1133">Transmembrane helix</keyword>
<keyword id="KW-0813">Transport</keyword>
<protein>
    <recommendedName>
        <fullName evidence="1">Photosystem I P700 chlorophyll a apoprotein A2</fullName>
        <ecNumber evidence="1">1.97.1.12</ecNumber>
    </recommendedName>
    <alternativeName>
        <fullName evidence="1">PsaB</fullName>
    </alternativeName>
</protein>
<feature type="chain" id="PRO_0000300026" description="Photosystem I P700 chlorophyll a apoprotein A2">
    <location>
        <begin position="1"/>
        <end position="744"/>
    </location>
</feature>
<feature type="transmembrane region" description="Helical; Name=I" evidence="1">
    <location>
        <begin position="48"/>
        <end position="71"/>
    </location>
</feature>
<feature type="transmembrane region" description="Helical; Name=II" evidence="1">
    <location>
        <begin position="137"/>
        <end position="160"/>
    </location>
</feature>
<feature type="transmembrane region" description="Helical; Name=III" evidence="1">
    <location>
        <begin position="177"/>
        <end position="201"/>
    </location>
</feature>
<feature type="transmembrane region" description="Helical; Name=IV" evidence="1">
    <location>
        <begin position="275"/>
        <end position="293"/>
    </location>
</feature>
<feature type="transmembrane region" description="Helical; Name=V" evidence="1">
    <location>
        <begin position="337"/>
        <end position="360"/>
    </location>
</feature>
<feature type="transmembrane region" description="Helical; Name=VI" evidence="1">
    <location>
        <begin position="376"/>
        <end position="402"/>
    </location>
</feature>
<feature type="transmembrane region" description="Helical; Name=VII" evidence="1">
    <location>
        <begin position="424"/>
        <end position="446"/>
    </location>
</feature>
<feature type="transmembrane region" description="Helical; Name=VIII" evidence="1">
    <location>
        <begin position="527"/>
        <end position="545"/>
    </location>
</feature>
<feature type="transmembrane region" description="Helical; Name=IX" evidence="1">
    <location>
        <begin position="585"/>
        <end position="606"/>
    </location>
</feature>
<feature type="transmembrane region" description="Helical; Name=X" evidence="1">
    <location>
        <begin position="653"/>
        <end position="675"/>
    </location>
</feature>
<feature type="transmembrane region" description="Helical; Name=XI" evidence="1">
    <location>
        <begin position="717"/>
        <end position="737"/>
    </location>
</feature>
<feature type="binding site" evidence="1">
    <location>
        <position position="569"/>
    </location>
    <ligand>
        <name>[4Fe-4S] cluster</name>
        <dbReference type="ChEBI" id="CHEBI:49883"/>
        <note>ligand shared between dimeric partners</note>
    </ligand>
</feature>
<feature type="binding site" evidence="1">
    <location>
        <position position="578"/>
    </location>
    <ligand>
        <name>[4Fe-4S] cluster</name>
        <dbReference type="ChEBI" id="CHEBI:49883"/>
        <note>ligand shared between dimeric partners</note>
    </ligand>
</feature>
<feature type="binding site" description="axial binding residue" evidence="1">
    <location>
        <position position="664"/>
    </location>
    <ligand>
        <name>chlorophyll a</name>
        <dbReference type="ChEBI" id="CHEBI:58416"/>
        <label>B1</label>
    </ligand>
    <ligandPart>
        <name>Mg</name>
        <dbReference type="ChEBI" id="CHEBI:25107"/>
    </ligandPart>
</feature>
<feature type="binding site" description="axial binding residue" evidence="1">
    <location>
        <position position="672"/>
    </location>
    <ligand>
        <name>chlorophyll a</name>
        <dbReference type="ChEBI" id="CHEBI:58416"/>
        <label>B3</label>
    </ligand>
    <ligandPart>
        <name>Mg</name>
        <dbReference type="ChEBI" id="CHEBI:25107"/>
    </ligandPart>
</feature>
<feature type="binding site" evidence="1">
    <location>
        <position position="680"/>
    </location>
    <ligand>
        <name>chlorophyll a</name>
        <dbReference type="ChEBI" id="CHEBI:58416"/>
        <label>B3</label>
    </ligand>
</feature>
<feature type="binding site" evidence="1">
    <location>
        <position position="681"/>
    </location>
    <ligand>
        <name>phylloquinone</name>
        <dbReference type="ChEBI" id="CHEBI:18067"/>
        <label>B</label>
    </ligand>
</feature>
<dbReference type="EC" id="1.97.1.12" evidence="1"/>
<dbReference type="EMBL" id="CP000240">
    <property type="protein sequence ID" value="ABD01022.1"/>
    <property type="molecule type" value="Genomic_DNA"/>
</dbReference>
<dbReference type="RefSeq" id="WP_011431693.1">
    <property type="nucleotide sequence ID" value="NC_007776.1"/>
</dbReference>
<dbReference type="SMR" id="Q2JQ90"/>
<dbReference type="STRING" id="321332.CYB_0021"/>
<dbReference type="KEGG" id="cyb:CYB_0021"/>
<dbReference type="eggNOG" id="COG2885">
    <property type="taxonomic scope" value="Bacteria"/>
</dbReference>
<dbReference type="HOGENOM" id="CLU_016126_1_0_3"/>
<dbReference type="OrthoDB" id="499313at2"/>
<dbReference type="Proteomes" id="UP000001938">
    <property type="component" value="Chromosome"/>
</dbReference>
<dbReference type="GO" id="GO:0009522">
    <property type="term" value="C:photosystem I"/>
    <property type="evidence" value="ECO:0007669"/>
    <property type="project" value="UniProtKB-KW"/>
</dbReference>
<dbReference type="GO" id="GO:0031676">
    <property type="term" value="C:plasma membrane-derived thylakoid membrane"/>
    <property type="evidence" value="ECO:0007669"/>
    <property type="project" value="UniProtKB-SubCell"/>
</dbReference>
<dbReference type="GO" id="GO:0051539">
    <property type="term" value="F:4 iron, 4 sulfur cluster binding"/>
    <property type="evidence" value="ECO:0007669"/>
    <property type="project" value="UniProtKB-KW"/>
</dbReference>
<dbReference type="GO" id="GO:0016168">
    <property type="term" value="F:chlorophyll binding"/>
    <property type="evidence" value="ECO:0007669"/>
    <property type="project" value="UniProtKB-KW"/>
</dbReference>
<dbReference type="GO" id="GO:0009055">
    <property type="term" value="F:electron transfer activity"/>
    <property type="evidence" value="ECO:0007669"/>
    <property type="project" value="UniProtKB-UniRule"/>
</dbReference>
<dbReference type="GO" id="GO:0000287">
    <property type="term" value="F:magnesium ion binding"/>
    <property type="evidence" value="ECO:0007669"/>
    <property type="project" value="UniProtKB-UniRule"/>
</dbReference>
<dbReference type="GO" id="GO:0016491">
    <property type="term" value="F:oxidoreductase activity"/>
    <property type="evidence" value="ECO:0007669"/>
    <property type="project" value="UniProtKB-KW"/>
</dbReference>
<dbReference type="GO" id="GO:0015979">
    <property type="term" value="P:photosynthesis"/>
    <property type="evidence" value="ECO:0007669"/>
    <property type="project" value="UniProtKB-UniRule"/>
</dbReference>
<dbReference type="FunFam" id="1.20.1130.10:FF:000001">
    <property type="entry name" value="Photosystem I P700 chlorophyll a apoprotein A2"/>
    <property type="match status" value="1"/>
</dbReference>
<dbReference type="Gene3D" id="1.20.1130.10">
    <property type="entry name" value="Photosystem I PsaA/PsaB"/>
    <property type="match status" value="1"/>
</dbReference>
<dbReference type="HAMAP" id="MF_00482">
    <property type="entry name" value="PSI_PsaB"/>
    <property type="match status" value="1"/>
</dbReference>
<dbReference type="InterPro" id="IPR001280">
    <property type="entry name" value="PSI_PsaA/B"/>
</dbReference>
<dbReference type="InterPro" id="IPR020586">
    <property type="entry name" value="PSI_PsaA/B_CS"/>
</dbReference>
<dbReference type="InterPro" id="IPR036408">
    <property type="entry name" value="PSI_PsaA/B_sf"/>
</dbReference>
<dbReference type="InterPro" id="IPR006244">
    <property type="entry name" value="PSI_PsaB"/>
</dbReference>
<dbReference type="NCBIfam" id="TIGR01336">
    <property type="entry name" value="psaB"/>
    <property type="match status" value="1"/>
</dbReference>
<dbReference type="PANTHER" id="PTHR30128">
    <property type="entry name" value="OUTER MEMBRANE PROTEIN, OMPA-RELATED"/>
    <property type="match status" value="1"/>
</dbReference>
<dbReference type="PANTHER" id="PTHR30128:SF19">
    <property type="entry name" value="PHOTOSYSTEM I P700 CHLOROPHYLL A APOPROTEIN A1-RELATED"/>
    <property type="match status" value="1"/>
</dbReference>
<dbReference type="Pfam" id="PF00223">
    <property type="entry name" value="PsaA_PsaB"/>
    <property type="match status" value="1"/>
</dbReference>
<dbReference type="PIRSF" id="PIRSF002905">
    <property type="entry name" value="PSI_A"/>
    <property type="match status" value="1"/>
</dbReference>
<dbReference type="PRINTS" id="PR00257">
    <property type="entry name" value="PHOTSYSPSAAB"/>
</dbReference>
<dbReference type="SUPFAM" id="SSF81558">
    <property type="entry name" value="Photosystem I subunits PsaA/PsaB"/>
    <property type="match status" value="1"/>
</dbReference>
<dbReference type="PROSITE" id="PS00419">
    <property type="entry name" value="PHOTOSYSTEM_I_PSAAB"/>
    <property type="match status" value="1"/>
</dbReference>
<comment type="function">
    <text evidence="1">PsaA and PsaB bind P700, the primary electron donor of photosystem I (PSI), as well as the electron acceptors A0, A1 and FX. PSI is a plastocyanin/cytochrome c6-ferredoxin oxidoreductase, converting photonic excitation into a charge separation, which transfers an electron from the donor P700 chlorophyll pair to the spectroscopically characterized acceptors A0, A1, FX, FA and FB in turn. Oxidized P700 is reduced on the lumenal side of the thylakoid membrane by plastocyanin or cytochrome c6.</text>
</comment>
<comment type="catalytic activity">
    <reaction evidence="1">
        <text>reduced [plastocyanin] + hnu + oxidized [2Fe-2S]-[ferredoxin] = oxidized [plastocyanin] + reduced [2Fe-2S]-[ferredoxin]</text>
        <dbReference type="Rhea" id="RHEA:30407"/>
        <dbReference type="Rhea" id="RHEA-COMP:10000"/>
        <dbReference type="Rhea" id="RHEA-COMP:10001"/>
        <dbReference type="Rhea" id="RHEA-COMP:10039"/>
        <dbReference type="Rhea" id="RHEA-COMP:10040"/>
        <dbReference type="ChEBI" id="CHEBI:29036"/>
        <dbReference type="ChEBI" id="CHEBI:30212"/>
        <dbReference type="ChEBI" id="CHEBI:33737"/>
        <dbReference type="ChEBI" id="CHEBI:33738"/>
        <dbReference type="ChEBI" id="CHEBI:49552"/>
        <dbReference type="EC" id="1.97.1.12"/>
    </reaction>
</comment>
<comment type="cofactor">
    <text evidence="1">PSI electron transfer chain: 5 chlorophyll a, 1 chlorophyll a', 2 phylloquinones and 3 4Fe-4S clusters. PSI core antenna: 90 chlorophyll a, 22 carotenoids, 3 phospholipids and 1 galactolipid. P700 is a chlorophyll a/chlorophyll a' dimer, A0 is one or more chlorophyll a, A1 is one or both phylloquinones and FX is a shared 4Fe-4S iron-sulfur center.</text>
</comment>
<comment type="subunit">
    <text evidence="1">The PsaA/B heterodimer binds the P700 chlorophyll special pair and subsequent electron acceptors. PSI consists of a core antenna complex that captures photons, and an electron transfer chain that converts photonic excitation into a charge separation. The cyanobacterial PSI reaction center is composed of one copy each of PsaA,B,C,D,E,F,I,J,K,L,M and X, and forms trimeric complexes.</text>
</comment>
<comment type="subcellular location">
    <subcellularLocation>
        <location evidence="1">Cellular thylakoid membrane</location>
        <topology evidence="1">Multi-pass membrane protein</topology>
    </subcellularLocation>
</comment>
<comment type="similarity">
    <text evidence="1">Belongs to the PsaA/PsaB family.</text>
</comment>
<evidence type="ECO:0000255" key="1">
    <source>
        <dbReference type="HAMAP-Rule" id="MF_00482"/>
    </source>
</evidence>
<accession>Q2JQ90</accession>